<name>IF1_MYCPN</name>
<proteinExistence type="evidence at protein level"/>
<reference key="1">
    <citation type="journal article" date="1996" name="Nucleic Acids Res.">
        <title>Sequence analysis of 56 kb from the genome of the bacterium Mycoplasma pneumoniae comprising the dnaA region, the atp operon and a cluster of ribosomal protein genes.</title>
        <authorList>
            <person name="Hilbert H."/>
            <person name="Himmelreich R."/>
            <person name="Plagens H."/>
            <person name="Herrmann R."/>
        </authorList>
    </citation>
    <scope>NUCLEOTIDE SEQUENCE [GENOMIC DNA]</scope>
    <source>
        <strain>ATCC 29342 / M129 / Subtype 1</strain>
    </source>
</reference>
<reference key="2">
    <citation type="journal article" date="1996" name="Nucleic Acids Res.">
        <title>Complete sequence analysis of the genome of the bacterium Mycoplasma pneumoniae.</title>
        <authorList>
            <person name="Himmelreich R."/>
            <person name="Hilbert H."/>
            <person name="Plagens H."/>
            <person name="Pirkl E."/>
            <person name="Li B.-C."/>
            <person name="Herrmann R."/>
        </authorList>
    </citation>
    <scope>NUCLEOTIDE SEQUENCE [LARGE SCALE GENOMIC DNA]</scope>
    <source>
        <strain>ATCC 29342 / M129 / Subtype 1</strain>
    </source>
</reference>
<reference key="3">
    <citation type="journal article" date="2000" name="Electrophoresis">
        <title>Towards a two-dimensional proteome map of Mycoplasma pneumoniae.</title>
        <authorList>
            <person name="Regula J.T."/>
            <person name="Ueberle B."/>
            <person name="Boguth G."/>
            <person name="Goerg A."/>
            <person name="Schnoelzer M."/>
            <person name="Herrmann R."/>
            <person name="Frank R."/>
        </authorList>
    </citation>
    <scope>IDENTIFICATION BY MASS SPECTROMETRY</scope>
    <source>
        <strain>ATCC 29342 / M129 / Subtype 1</strain>
    </source>
</reference>
<organism>
    <name type="scientific">Mycoplasma pneumoniae (strain ATCC 29342 / M129 / Subtype 1)</name>
    <name type="common">Mycoplasmoides pneumoniae</name>
    <dbReference type="NCBI Taxonomy" id="272634"/>
    <lineage>
        <taxon>Bacteria</taxon>
        <taxon>Bacillati</taxon>
        <taxon>Mycoplasmatota</taxon>
        <taxon>Mycoplasmoidales</taxon>
        <taxon>Mycoplasmoidaceae</taxon>
        <taxon>Mycoplasmoides</taxon>
    </lineage>
</organism>
<accession>Q50298</accession>
<feature type="chain" id="PRO_0000095825" description="Translation initiation factor IF-1">
    <location>
        <begin position="1"/>
        <end position="78"/>
    </location>
</feature>
<feature type="domain" description="S1-like" evidence="1">
    <location>
        <begin position="4"/>
        <end position="78"/>
    </location>
</feature>
<protein>
    <recommendedName>
        <fullName evidence="1">Translation initiation factor IF-1</fullName>
    </recommendedName>
</protein>
<dbReference type="EMBL" id="U34795">
    <property type="protein sequence ID" value="AAC43694.1"/>
    <property type="molecule type" value="Genomic_DNA"/>
</dbReference>
<dbReference type="EMBL" id="U00089">
    <property type="protein sequence ID" value="AAB96292.1"/>
    <property type="molecule type" value="Genomic_DNA"/>
</dbReference>
<dbReference type="PIR" id="S62821">
    <property type="entry name" value="S62821"/>
</dbReference>
<dbReference type="RefSeq" id="NP_109875.1">
    <property type="nucleotide sequence ID" value="NC_000912.1"/>
</dbReference>
<dbReference type="RefSeq" id="WP_010874544.1">
    <property type="nucleotide sequence ID" value="NZ_OU342337.1"/>
</dbReference>
<dbReference type="SMR" id="Q50298"/>
<dbReference type="IntAct" id="Q50298">
    <property type="interactions" value="7"/>
</dbReference>
<dbReference type="STRING" id="272634.MPN_187"/>
<dbReference type="EnsemblBacteria" id="AAB96292">
    <property type="protein sequence ID" value="AAB96292"/>
    <property type="gene ID" value="MPN_187"/>
</dbReference>
<dbReference type="GeneID" id="66609165"/>
<dbReference type="KEGG" id="mpn:MPN_187"/>
<dbReference type="PATRIC" id="fig|272634.6.peg.205"/>
<dbReference type="HOGENOM" id="CLU_151267_1_0_14"/>
<dbReference type="OrthoDB" id="9803250at2"/>
<dbReference type="BioCyc" id="MPNE272634:G1GJ3-302-MONOMER"/>
<dbReference type="Proteomes" id="UP000000808">
    <property type="component" value="Chromosome"/>
</dbReference>
<dbReference type="GO" id="GO:0005829">
    <property type="term" value="C:cytosol"/>
    <property type="evidence" value="ECO:0007669"/>
    <property type="project" value="TreeGrafter"/>
</dbReference>
<dbReference type="GO" id="GO:0043022">
    <property type="term" value="F:ribosome binding"/>
    <property type="evidence" value="ECO:0007669"/>
    <property type="project" value="UniProtKB-UniRule"/>
</dbReference>
<dbReference type="GO" id="GO:0019843">
    <property type="term" value="F:rRNA binding"/>
    <property type="evidence" value="ECO:0007669"/>
    <property type="project" value="UniProtKB-UniRule"/>
</dbReference>
<dbReference type="GO" id="GO:0003743">
    <property type="term" value="F:translation initiation factor activity"/>
    <property type="evidence" value="ECO:0007669"/>
    <property type="project" value="UniProtKB-UniRule"/>
</dbReference>
<dbReference type="CDD" id="cd04451">
    <property type="entry name" value="S1_IF1"/>
    <property type="match status" value="1"/>
</dbReference>
<dbReference type="Gene3D" id="2.40.50.140">
    <property type="entry name" value="Nucleic acid-binding proteins"/>
    <property type="match status" value="1"/>
</dbReference>
<dbReference type="HAMAP" id="MF_00075">
    <property type="entry name" value="IF_1"/>
    <property type="match status" value="1"/>
</dbReference>
<dbReference type="InterPro" id="IPR012340">
    <property type="entry name" value="NA-bd_OB-fold"/>
</dbReference>
<dbReference type="InterPro" id="IPR006196">
    <property type="entry name" value="RNA-binding_domain_S1_IF1"/>
</dbReference>
<dbReference type="InterPro" id="IPR004368">
    <property type="entry name" value="TIF_IF1"/>
</dbReference>
<dbReference type="NCBIfam" id="TIGR00008">
    <property type="entry name" value="infA"/>
    <property type="match status" value="1"/>
</dbReference>
<dbReference type="PANTHER" id="PTHR33370">
    <property type="entry name" value="TRANSLATION INITIATION FACTOR IF-1, CHLOROPLASTIC"/>
    <property type="match status" value="1"/>
</dbReference>
<dbReference type="PANTHER" id="PTHR33370:SF1">
    <property type="entry name" value="TRANSLATION INITIATION FACTOR IF-1, CHLOROPLASTIC"/>
    <property type="match status" value="1"/>
</dbReference>
<dbReference type="Pfam" id="PF01176">
    <property type="entry name" value="eIF-1a"/>
    <property type="match status" value="1"/>
</dbReference>
<dbReference type="SUPFAM" id="SSF50249">
    <property type="entry name" value="Nucleic acid-binding proteins"/>
    <property type="match status" value="1"/>
</dbReference>
<dbReference type="PROSITE" id="PS50832">
    <property type="entry name" value="S1_IF1_TYPE"/>
    <property type="match status" value="1"/>
</dbReference>
<sequence length="78" mass="9025">MQPKFNNQAKQDKLVLTGKILEIIHGDKFRVLLENNVEVDAHLAGKMRMRRLRILPGDLVEVEFSPYDLKLGRIIGRK</sequence>
<evidence type="ECO:0000255" key="1">
    <source>
        <dbReference type="HAMAP-Rule" id="MF_00075"/>
    </source>
</evidence>
<keyword id="KW-0963">Cytoplasm</keyword>
<keyword id="KW-0396">Initiation factor</keyword>
<keyword id="KW-0648">Protein biosynthesis</keyword>
<keyword id="KW-1185">Reference proteome</keyword>
<keyword id="KW-0694">RNA-binding</keyword>
<keyword id="KW-0699">rRNA-binding</keyword>
<comment type="function">
    <text evidence="1">One of the essential components for the initiation of protein synthesis. Stabilizes the binding of IF-2 and IF-3 on the 30S subunit to which N-formylmethionyl-tRNA(fMet) subsequently binds. Helps modulate mRNA selection, yielding the 30S pre-initiation complex (PIC). Upon addition of the 50S ribosomal subunit IF-1, IF-2 and IF-3 are released leaving the mature 70S translation initiation complex.</text>
</comment>
<comment type="subunit">
    <text evidence="1">Component of the 30S ribosomal translation pre-initiation complex which assembles on the 30S ribosome in the order IF-2 and IF-3, IF-1 and N-formylmethionyl-tRNA(fMet); mRNA recruitment can occur at any time during PIC assembly.</text>
</comment>
<comment type="subcellular location">
    <subcellularLocation>
        <location evidence="1">Cytoplasm</location>
    </subcellularLocation>
</comment>
<comment type="similarity">
    <text evidence="1">Belongs to the IF-1 family.</text>
</comment>
<gene>
    <name evidence="1" type="primary">infA</name>
    <name type="ordered locus">MPN_187</name>
    <name type="ORF">MP644</name>
</gene>